<dbReference type="EMBL" id="X01729">
    <property type="protein sequence ID" value="CAA25866.1"/>
    <property type="molecule type" value="Genomic_DNA"/>
</dbReference>
<dbReference type="PIR" id="S07266">
    <property type="entry name" value="S07266"/>
</dbReference>
<dbReference type="GO" id="GO:0030435">
    <property type="term" value="P:sporulation resulting in formation of a cellular spore"/>
    <property type="evidence" value="ECO:0007669"/>
    <property type="project" value="UniProtKB-KW"/>
</dbReference>
<accession>P05678</accession>
<reference key="1">
    <citation type="journal article" date="1984" name="J. Mol. Biol.">
        <title>Structure and regulated expression of the SpoC1 gene cluster from Aspergillus nidulans.</title>
        <authorList>
            <person name="Gwynne D.I."/>
            <person name="Miller B.L."/>
            <person name="Miller K.Y."/>
            <person name="Timberlake W.E."/>
        </authorList>
    </citation>
    <scope>NUCLEOTIDE SEQUENCE [GENOMIC DNA]</scope>
</reference>
<feature type="chain" id="PRO_0000066059" description="Putative uncharacterized 10.9 kDa protein in spoC1 gene cluster region">
    <location>
        <begin position="1"/>
        <end position="97"/>
    </location>
</feature>
<name>Y109_EMEND</name>
<keyword id="KW-0749">Sporulation</keyword>
<organism>
    <name type="scientific">Emericella nidulans</name>
    <name type="common">Aspergillus nidulans</name>
    <dbReference type="NCBI Taxonomy" id="162425"/>
    <lineage>
        <taxon>Eukaryota</taxon>
        <taxon>Fungi</taxon>
        <taxon>Dikarya</taxon>
        <taxon>Ascomycota</taxon>
        <taxon>Pezizomycotina</taxon>
        <taxon>Eurotiomycetes</taxon>
        <taxon>Eurotiomycetidae</taxon>
        <taxon>Eurotiales</taxon>
        <taxon>Aspergillaceae</taxon>
        <taxon>Aspergillus</taxon>
        <taxon>Aspergillus subgen. Nidulantes</taxon>
    </lineage>
</organism>
<proteinExistence type="evidence at transcript level"/>
<comment type="developmental stage">
    <text>Preferably expressed in spores.</text>
</comment>
<sequence>MSNRIYWHRCSGLNPFQIITSLRLTQPGQRLGIANQGYRRFLLVSSSIADTRELSMSYHPSTYLTQSGNILPSVDKGLCFEKLLETVFLSVGGCVRL</sequence>
<protein>
    <recommendedName>
        <fullName>Putative uncharacterized 10.9 kDa protein in spoC1 gene cluster region</fullName>
    </recommendedName>
</protein>